<feature type="chain" id="PRO_0000084591" description="Cell division cycle protein 48 homolog MJ1156">
    <location>
        <begin position="1"/>
        <end position="903"/>
    </location>
</feature>
<feature type="binding site" evidence="1">
    <location>
        <begin position="220"/>
        <end position="227"/>
    </location>
    <ligand>
        <name>ATP</name>
        <dbReference type="ChEBI" id="CHEBI:30616"/>
    </ligand>
</feature>
<feature type="binding site" evidence="1">
    <location>
        <begin position="493"/>
        <end position="500"/>
    </location>
    <ligand>
        <name>ATP</name>
        <dbReference type="ChEBI" id="CHEBI:30616"/>
    </ligand>
</feature>
<protein>
    <recommendedName>
        <fullName>Cell division cycle protein 48 homolog MJ1156</fullName>
    </recommendedName>
</protein>
<sequence>MVKELKVAEAYQGDVGRGIARIDPYTMEELGLKPGDVIEIEGPKGKAYAIVYRGFLEDAGKGIIRIDGYLRQNAGVAIGDRVKVKRVEIKEAKKVVLAPTQPIRFGPGFEDFVKRKILGQVLSKGSKVTIGVLGTALTFVVVSTTPAGPVRVTDFTHVELKEEPVSEIKETKVPDVTYEDIGGLKEEVKKVREMIELPMRHPELFEKLGIEPPKGVLLVGPPGTGKTLLAKAVANEAGANFYVINGPEIMSKYVGETEENLRKIFEEAEENAPSIIFIDEIDAIAPKRDEATGEVERRLVAQLLTLMDGLKGRGQVVVIGATNRPNALDPALRRPGRFDREIVIGVPDREGRKEILQIHTRNMPLAEDVDLDYLADVTHGFVGADLAALCKEAAMRALRRVLPSIDLEAEEIPKEVLDNLKVTMDDFKEALKDVEPSAMREVLVEVPNVKWEDIGGLEEVKQELREAVEWPLKAKEVFEKIGVRPPKGVLLFGPPGTGKTLLAKAVANESGANFISVKGPEIFSKWVGESEKAIREIFRKARQSAPCIIFFDEIDAIAPKRGRDLSSAVTDKVVNQLLTELDGMEEPKDVVVIAATNRPDIIDPALLRPGRLDRVILVPVPDEKARLDIFKIHTRSMNLAEDVNLEELAKKTEGYTGADIEALCREAAMLAVRESIGKPWDIEVKLRELINYLQSISGTFRAAAVELNSVIKATKERESAEAGEFSELKNAIGKIISVLSPAKEKIEAVEKEIDKFLEVINKEELKPSEKDEAQKLAKYLKDILGKLKEMIDNIYELENKLNTLKEQVSAEEIDEIIKTTQNIIQRFTTSLDELKNILKDIESIRLKVSTKDVKIKKEHFMKALEKIKPSVSKEDMRVYEKLAQEYGRATSVEKKKEEGKEVI</sequence>
<name>Y1156_METJA</name>
<keyword id="KW-0067">ATP-binding</keyword>
<keyword id="KW-0547">Nucleotide-binding</keyword>
<keyword id="KW-1185">Reference proteome</keyword>
<keyword id="KW-0677">Repeat</keyword>
<evidence type="ECO:0000255" key="1"/>
<evidence type="ECO:0000305" key="2"/>
<organism>
    <name type="scientific">Methanocaldococcus jannaschii (strain ATCC 43067 / DSM 2661 / JAL-1 / JCM 10045 / NBRC 100440)</name>
    <name type="common">Methanococcus jannaschii</name>
    <dbReference type="NCBI Taxonomy" id="243232"/>
    <lineage>
        <taxon>Archaea</taxon>
        <taxon>Methanobacteriati</taxon>
        <taxon>Methanobacteriota</taxon>
        <taxon>Methanomada group</taxon>
        <taxon>Methanococci</taxon>
        <taxon>Methanococcales</taxon>
        <taxon>Methanocaldococcaceae</taxon>
        <taxon>Methanocaldococcus</taxon>
    </lineage>
</organism>
<accession>Q58556</accession>
<comment type="similarity">
    <text evidence="2">Belongs to the AAA ATPase family. CDC48 subfamily.</text>
</comment>
<reference key="1">
    <citation type="journal article" date="1996" name="Science">
        <title>Complete genome sequence of the methanogenic archaeon, Methanococcus jannaschii.</title>
        <authorList>
            <person name="Bult C.J."/>
            <person name="White O."/>
            <person name="Olsen G.J."/>
            <person name="Zhou L."/>
            <person name="Fleischmann R.D."/>
            <person name="Sutton G.G."/>
            <person name="Blake J.A."/>
            <person name="FitzGerald L.M."/>
            <person name="Clayton R.A."/>
            <person name="Gocayne J.D."/>
            <person name="Kerlavage A.R."/>
            <person name="Dougherty B.A."/>
            <person name="Tomb J.-F."/>
            <person name="Adams M.D."/>
            <person name="Reich C.I."/>
            <person name="Overbeek R."/>
            <person name="Kirkness E.F."/>
            <person name="Weinstock K.G."/>
            <person name="Merrick J.M."/>
            <person name="Glodek A."/>
            <person name="Scott J.L."/>
            <person name="Geoghagen N.S.M."/>
            <person name="Weidman J.F."/>
            <person name="Fuhrmann J.L."/>
            <person name="Nguyen D."/>
            <person name="Utterback T.R."/>
            <person name="Kelley J.M."/>
            <person name="Peterson J.D."/>
            <person name="Sadow P.W."/>
            <person name="Hanna M.C."/>
            <person name="Cotton M.D."/>
            <person name="Roberts K.M."/>
            <person name="Hurst M.A."/>
            <person name="Kaine B.P."/>
            <person name="Borodovsky M."/>
            <person name="Klenk H.-P."/>
            <person name="Fraser C.M."/>
            <person name="Smith H.O."/>
            <person name="Woese C.R."/>
            <person name="Venter J.C."/>
        </authorList>
    </citation>
    <scope>NUCLEOTIDE SEQUENCE [LARGE SCALE GENOMIC DNA]</scope>
    <source>
        <strain>ATCC 43067 / DSM 2661 / JAL-1 / JCM 10045 / NBRC 100440</strain>
    </source>
</reference>
<dbReference type="EMBL" id="L77117">
    <property type="protein sequence ID" value="AAB99153.1"/>
    <property type="molecule type" value="Genomic_DNA"/>
</dbReference>
<dbReference type="PIR" id="C64444">
    <property type="entry name" value="C64444"/>
</dbReference>
<dbReference type="RefSeq" id="WP_010870669.1">
    <property type="nucleotide sequence ID" value="NC_000909.1"/>
</dbReference>
<dbReference type="SMR" id="Q58556"/>
<dbReference type="FunCoup" id="Q58556">
    <property type="interactions" value="106"/>
</dbReference>
<dbReference type="STRING" id="243232.MJ_1156"/>
<dbReference type="PaxDb" id="243232-MJ_1156"/>
<dbReference type="EnsemblBacteria" id="AAB99153">
    <property type="protein sequence ID" value="AAB99153"/>
    <property type="gene ID" value="MJ_1156"/>
</dbReference>
<dbReference type="GeneID" id="1452054"/>
<dbReference type="KEGG" id="mja:MJ_1156"/>
<dbReference type="eggNOG" id="arCOG01308">
    <property type="taxonomic scope" value="Archaea"/>
</dbReference>
<dbReference type="HOGENOM" id="CLU_000688_12_2_2"/>
<dbReference type="InParanoid" id="Q58556"/>
<dbReference type="OrthoDB" id="77269at2157"/>
<dbReference type="PhylomeDB" id="Q58556"/>
<dbReference type="Proteomes" id="UP000000805">
    <property type="component" value="Chromosome"/>
</dbReference>
<dbReference type="GO" id="GO:0005737">
    <property type="term" value="C:cytoplasm"/>
    <property type="evidence" value="ECO:0007669"/>
    <property type="project" value="UniProtKB-ARBA"/>
</dbReference>
<dbReference type="GO" id="GO:0043231">
    <property type="term" value="C:intracellular membrane-bounded organelle"/>
    <property type="evidence" value="ECO:0007669"/>
    <property type="project" value="UniProtKB-ARBA"/>
</dbReference>
<dbReference type="GO" id="GO:0005524">
    <property type="term" value="F:ATP binding"/>
    <property type="evidence" value="ECO:0007669"/>
    <property type="project" value="UniProtKB-KW"/>
</dbReference>
<dbReference type="GO" id="GO:0016887">
    <property type="term" value="F:ATP hydrolysis activity"/>
    <property type="evidence" value="ECO:0000318"/>
    <property type="project" value="GO_Central"/>
</dbReference>
<dbReference type="CDD" id="cd19519">
    <property type="entry name" value="RecA-like_CDC48_r1-like"/>
    <property type="match status" value="1"/>
</dbReference>
<dbReference type="CDD" id="cd19529">
    <property type="entry name" value="RecA-like_VCP_r2"/>
    <property type="match status" value="1"/>
</dbReference>
<dbReference type="FunFam" id="2.40.40.20:FF:000007">
    <property type="entry name" value="AAA family ATPase"/>
    <property type="match status" value="1"/>
</dbReference>
<dbReference type="FunFam" id="1.10.8.60:FF:000057">
    <property type="entry name" value="AAA family ATPase, CDC48 subfamily"/>
    <property type="match status" value="1"/>
</dbReference>
<dbReference type="FunFam" id="3.10.330.10:FF:000008">
    <property type="entry name" value="AAA family ATPase, CDC48 subfamily"/>
    <property type="match status" value="1"/>
</dbReference>
<dbReference type="FunFam" id="3.40.50.300:FF:000018">
    <property type="entry name" value="Cell division control 48"/>
    <property type="match status" value="1"/>
</dbReference>
<dbReference type="FunFam" id="1.10.8.60:FF:000038">
    <property type="entry name" value="spermatogenesis-associated protein 5-like protein 1"/>
    <property type="match status" value="1"/>
</dbReference>
<dbReference type="FunFam" id="3.40.50.300:FF:000012">
    <property type="entry name" value="Transitional endoplasmic reticulum ATPase"/>
    <property type="match status" value="1"/>
</dbReference>
<dbReference type="Gene3D" id="1.10.8.60">
    <property type="match status" value="2"/>
</dbReference>
<dbReference type="Gene3D" id="2.40.40.20">
    <property type="match status" value="1"/>
</dbReference>
<dbReference type="Gene3D" id="3.10.330.10">
    <property type="match status" value="1"/>
</dbReference>
<dbReference type="Gene3D" id="3.40.50.300">
    <property type="entry name" value="P-loop containing nucleotide triphosphate hydrolases"/>
    <property type="match status" value="2"/>
</dbReference>
<dbReference type="InterPro" id="IPR003593">
    <property type="entry name" value="AAA+_ATPase"/>
</dbReference>
<dbReference type="InterPro" id="IPR005938">
    <property type="entry name" value="AAA_ATPase_CDC48"/>
</dbReference>
<dbReference type="InterPro" id="IPR050168">
    <property type="entry name" value="AAA_ATPase_domain"/>
</dbReference>
<dbReference type="InterPro" id="IPR041569">
    <property type="entry name" value="AAA_lid_3"/>
</dbReference>
<dbReference type="InterPro" id="IPR009010">
    <property type="entry name" value="Asp_de-COase-like_dom_sf"/>
</dbReference>
<dbReference type="InterPro" id="IPR003959">
    <property type="entry name" value="ATPase_AAA_core"/>
</dbReference>
<dbReference type="InterPro" id="IPR003960">
    <property type="entry name" value="ATPase_AAA_CS"/>
</dbReference>
<dbReference type="InterPro" id="IPR004201">
    <property type="entry name" value="Cdc48_dom2"/>
</dbReference>
<dbReference type="InterPro" id="IPR029067">
    <property type="entry name" value="CDC48_domain_2-like_sf"/>
</dbReference>
<dbReference type="InterPro" id="IPR003338">
    <property type="entry name" value="CDC4_N-term_subdom"/>
</dbReference>
<dbReference type="InterPro" id="IPR027417">
    <property type="entry name" value="P-loop_NTPase"/>
</dbReference>
<dbReference type="InterPro" id="IPR015415">
    <property type="entry name" value="Spast_Vps4_C"/>
</dbReference>
<dbReference type="NCBIfam" id="TIGR01243">
    <property type="entry name" value="CDC48"/>
    <property type="match status" value="1"/>
</dbReference>
<dbReference type="PANTHER" id="PTHR23077">
    <property type="entry name" value="AAA-FAMILY ATPASE"/>
    <property type="match status" value="1"/>
</dbReference>
<dbReference type="PANTHER" id="PTHR23077:SF171">
    <property type="entry name" value="NUCLEAR VALOSIN-CONTAINING PROTEIN-LIKE"/>
    <property type="match status" value="1"/>
</dbReference>
<dbReference type="Pfam" id="PF00004">
    <property type="entry name" value="AAA"/>
    <property type="match status" value="2"/>
</dbReference>
<dbReference type="Pfam" id="PF17862">
    <property type="entry name" value="AAA_lid_3"/>
    <property type="match status" value="2"/>
</dbReference>
<dbReference type="Pfam" id="PF02933">
    <property type="entry name" value="CDC48_2"/>
    <property type="match status" value="1"/>
</dbReference>
<dbReference type="Pfam" id="PF02359">
    <property type="entry name" value="CDC48_N"/>
    <property type="match status" value="1"/>
</dbReference>
<dbReference type="Pfam" id="PF09336">
    <property type="entry name" value="Vps4_C"/>
    <property type="match status" value="1"/>
</dbReference>
<dbReference type="PRINTS" id="PR00830">
    <property type="entry name" value="ENDOLAPTASE"/>
</dbReference>
<dbReference type="SMART" id="SM00382">
    <property type="entry name" value="AAA"/>
    <property type="match status" value="2"/>
</dbReference>
<dbReference type="SMART" id="SM01072">
    <property type="entry name" value="CDC48_2"/>
    <property type="match status" value="1"/>
</dbReference>
<dbReference type="SMART" id="SM01073">
    <property type="entry name" value="CDC48_N"/>
    <property type="match status" value="1"/>
</dbReference>
<dbReference type="SUPFAM" id="SSF50692">
    <property type="entry name" value="ADC-like"/>
    <property type="match status" value="1"/>
</dbReference>
<dbReference type="SUPFAM" id="SSF54585">
    <property type="entry name" value="Cdc48 domain 2-like"/>
    <property type="match status" value="1"/>
</dbReference>
<dbReference type="SUPFAM" id="SSF52540">
    <property type="entry name" value="P-loop containing nucleoside triphosphate hydrolases"/>
    <property type="match status" value="2"/>
</dbReference>
<dbReference type="PROSITE" id="PS00674">
    <property type="entry name" value="AAA"/>
    <property type="match status" value="2"/>
</dbReference>
<proteinExistence type="inferred from homology"/>
<gene>
    <name type="ordered locus">MJ1156</name>
</gene>